<feature type="chain" id="PRO_0000077136" description="Large ribosomal subunit protein uL3">
    <location>
        <begin position="1"/>
        <end position="218"/>
    </location>
</feature>
<feature type="region of interest" description="Disordered" evidence="2">
    <location>
        <begin position="126"/>
        <end position="170"/>
    </location>
</feature>
<sequence>MSIGILGKKLGMSQFFDDQGRAIPVTLIEAGPCRITQLKTSEIDGYAAVQIGFGDTREKLINKPSKGHLTKSGEVLLKHLREYRVEGLEGLELGAAITVGSFEAGQKVDVSGDTMGRGFAGYQKRHGFSRGPMSHGSKNHREPGSTGAGTTPGRIYPGKRMAGRYGGKKRTTRGLTILKVDSNRNLLVVKGSVPGKPGALLNIRPAKRVGNKPAQGGK</sequence>
<name>RL3_PROMM</name>
<reference key="1">
    <citation type="journal article" date="2003" name="Nature">
        <title>Genome divergence in two Prochlorococcus ecotypes reflects oceanic niche differentiation.</title>
        <authorList>
            <person name="Rocap G."/>
            <person name="Larimer F.W."/>
            <person name="Lamerdin J.E."/>
            <person name="Malfatti S."/>
            <person name="Chain P."/>
            <person name="Ahlgren N.A."/>
            <person name="Arellano A."/>
            <person name="Coleman M."/>
            <person name="Hauser L."/>
            <person name="Hess W.R."/>
            <person name="Johnson Z.I."/>
            <person name="Land M.L."/>
            <person name="Lindell D."/>
            <person name="Post A.F."/>
            <person name="Regala W."/>
            <person name="Shah M."/>
            <person name="Shaw S.L."/>
            <person name="Steglich C."/>
            <person name="Sullivan M.B."/>
            <person name="Ting C.S."/>
            <person name="Tolonen A."/>
            <person name="Webb E.A."/>
            <person name="Zinser E.R."/>
            <person name="Chisholm S.W."/>
        </authorList>
    </citation>
    <scope>NUCLEOTIDE SEQUENCE [LARGE SCALE GENOMIC DNA]</scope>
    <source>
        <strain>MIT 9313</strain>
    </source>
</reference>
<comment type="function">
    <text evidence="1">One of the primary rRNA binding proteins, it binds directly near the 3'-end of the 23S rRNA, where it nucleates assembly of the 50S subunit.</text>
</comment>
<comment type="subunit">
    <text evidence="1">Part of the 50S ribosomal subunit. Forms a cluster with proteins L14 and L19.</text>
</comment>
<comment type="similarity">
    <text evidence="1">Belongs to the universal ribosomal protein uL3 family.</text>
</comment>
<gene>
    <name evidence="1" type="primary">rplC</name>
    <name evidence="1" type="synonym">rpl3</name>
    <name type="ordered locus">PMT_1732</name>
</gene>
<protein>
    <recommendedName>
        <fullName evidence="1">Large ribosomal subunit protein uL3</fullName>
    </recommendedName>
    <alternativeName>
        <fullName evidence="3">50S ribosomal protein L3</fullName>
    </alternativeName>
</protein>
<evidence type="ECO:0000255" key="1">
    <source>
        <dbReference type="HAMAP-Rule" id="MF_01325"/>
    </source>
</evidence>
<evidence type="ECO:0000256" key="2">
    <source>
        <dbReference type="SAM" id="MobiDB-lite"/>
    </source>
</evidence>
<evidence type="ECO:0000305" key="3"/>
<accession>Q7V542</accession>
<keyword id="KW-1185">Reference proteome</keyword>
<keyword id="KW-0687">Ribonucleoprotein</keyword>
<keyword id="KW-0689">Ribosomal protein</keyword>
<keyword id="KW-0694">RNA-binding</keyword>
<keyword id="KW-0699">rRNA-binding</keyword>
<proteinExistence type="inferred from homology"/>
<dbReference type="EMBL" id="BX548175">
    <property type="protein sequence ID" value="CAE21907.1"/>
    <property type="molecule type" value="Genomic_DNA"/>
</dbReference>
<dbReference type="RefSeq" id="WP_011131099.1">
    <property type="nucleotide sequence ID" value="NC_005071.1"/>
</dbReference>
<dbReference type="SMR" id="Q7V542"/>
<dbReference type="KEGG" id="pmt:PMT_1732"/>
<dbReference type="eggNOG" id="COG0087">
    <property type="taxonomic scope" value="Bacteria"/>
</dbReference>
<dbReference type="HOGENOM" id="CLU_044142_4_1_3"/>
<dbReference type="OrthoDB" id="9806135at2"/>
<dbReference type="Proteomes" id="UP000001423">
    <property type="component" value="Chromosome"/>
</dbReference>
<dbReference type="GO" id="GO:0022625">
    <property type="term" value="C:cytosolic large ribosomal subunit"/>
    <property type="evidence" value="ECO:0007669"/>
    <property type="project" value="TreeGrafter"/>
</dbReference>
<dbReference type="GO" id="GO:0019843">
    <property type="term" value="F:rRNA binding"/>
    <property type="evidence" value="ECO:0007669"/>
    <property type="project" value="UniProtKB-UniRule"/>
</dbReference>
<dbReference type="GO" id="GO:0003735">
    <property type="term" value="F:structural constituent of ribosome"/>
    <property type="evidence" value="ECO:0007669"/>
    <property type="project" value="InterPro"/>
</dbReference>
<dbReference type="GO" id="GO:0006412">
    <property type="term" value="P:translation"/>
    <property type="evidence" value="ECO:0007669"/>
    <property type="project" value="UniProtKB-UniRule"/>
</dbReference>
<dbReference type="FunFam" id="3.30.160.810:FF:000001">
    <property type="entry name" value="50S ribosomal protein L3"/>
    <property type="match status" value="1"/>
</dbReference>
<dbReference type="FunFam" id="2.40.30.10:FF:000065">
    <property type="entry name" value="50S ribosomal protein L3, chloroplastic"/>
    <property type="match status" value="1"/>
</dbReference>
<dbReference type="Gene3D" id="3.30.160.810">
    <property type="match status" value="1"/>
</dbReference>
<dbReference type="Gene3D" id="2.40.30.10">
    <property type="entry name" value="Translation factors"/>
    <property type="match status" value="1"/>
</dbReference>
<dbReference type="HAMAP" id="MF_01325_B">
    <property type="entry name" value="Ribosomal_uL3_B"/>
    <property type="match status" value="1"/>
</dbReference>
<dbReference type="InterPro" id="IPR000597">
    <property type="entry name" value="Ribosomal_uL3"/>
</dbReference>
<dbReference type="InterPro" id="IPR019927">
    <property type="entry name" value="Ribosomal_uL3_bac/org-type"/>
</dbReference>
<dbReference type="InterPro" id="IPR019926">
    <property type="entry name" value="Ribosomal_uL3_CS"/>
</dbReference>
<dbReference type="InterPro" id="IPR009000">
    <property type="entry name" value="Transl_B-barrel_sf"/>
</dbReference>
<dbReference type="NCBIfam" id="TIGR03625">
    <property type="entry name" value="L3_bact"/>
    <property type="match status" value="1"/>
</dbReference>
<dbReference type="PANTHER" id="PTHR11229">
    <property type="entry name" value="50S RIBOSOMAL PROTEIN L3"/>
    <property type="match status" value="1"/>
</dbReference>
<dbReference type="PANTHER" id="PTHR11229:SF16">
    <property type="entry name" value="LARGE RIBOSOMAL SUBUNIT PROTEIN UL3C"/>
    <property type="match status" value="1"/>
</dbReference>
<dbReference type="Pfam" id="PF00297">
    <property type="entry name" value="Ribosomal_L3"/>
    <property type="match status" value="1"/>
</dbReference>
<dbReference type="SUPFAM" id="SSF50447">
    <property type="entry name" value="Translation proteins"/>
    <property type="match status" value="1"/>
</dbReference>
<dbReference type="PROSITE" id="PS00474">
    <property type="entry name" value="RIBOSOMAL_L3"/>
    <property type="match status" value="1"/>
</dbReference>
<organism>
    <name type="scientific">Prochlorococcus marinus (strain MIT 9313)</name>
    <dbReference type="NCBI Taxonomy" id="74547"/>
    <lineage>
        <taxon>Bacteria</taxon>
        <taxon>Bacillati</taxon>
        <taxon>Cyanobacteriota</taxon>
        <taxon>Cyanophyceae</taxon>
        <taxon>Synechococcales</taxon>
        <taxon>Prochlorococcaceae</taxon>
        <taxon>Prochlorococcus</taxon>
    </lineage>
</organism>